<gene>
    <name evidence="1" type="primary">iscA</name>
    <name type="ordered locus">KPK_1259</name>
</gene>
<dbReference type="EMBL" id="CP000964">
    <property type="protein sequence ID" value="ACI08241.1"/>
    <property type="molecule type" value="Genomic_DNA"/>
</dbReference>
<dbReference type="SMR" id="B5XNJ9"/>
<dbReference type="KEGG" id="kpe:KPK_1259"/>
<dbReference type="HOGENOM" id="CLU_069054_5_1_6"/>
<dbReference type="Proteomes" id="UP000001734">
    <property type="component" value="Chromosome"/>
</dbReference>
<dbReference type="GO" id="GO:0005829">
    <property type="term" value="C:cytosol"/>
    <property type="evidence" value="ECO:0007669"/>
    <property type="project" value="TreeGrafter"/>
</dbReference>
<dbReference type="GO" id="GO:0051537">
    <property type="term" value="F:2 iron, 2 sulfur cluster binding"/>
    <property type="evidence" value="ECO:0007669"/>
    <property type="project" value="TreeGrafter"/>
</dbReference>
<dbReference type="GO" id="GO:0005506">
    <property type="term" value="F:iron ion binding"/>
    <property type="evidence" value="ECO:0007669"/>
    <property type="project" value="UniProtKB-UniRule"/>
</dbReference>
<dbReference type="GO" id="GO:0016226">
    <property type="term" value="P:iron-sulfur cluster assembly"/>
    <property type="evidence" value="ECO:0007669"/>
    <property type="project" value="UniProtKB-UniRule"/>
</dbReference>
<dbReference type="FunFam" id="2.60.300.12:FF:000001">
    <property type="entry name" value="Iron-binding protein IscA"/>
    <property type="match status" value="1"/>
</dbReference>
<dbReference type="Gene3D" id="2.60.300.12">
    <property type="entry name" value="HesB-like domain"/>
    <property type="match status" value="1"/>
</dbReference>
<dbReference type="HAMAP" id="MF_01429">
    <property type="entry name" value="Fe_S_insert_IscA"/>
    <property type="match status" value="1"/>
</dbReference>
<dbReference type="InterPro" id="IPR050322">
    <property type="entry name" value="Fe-S_cluster_asmbl/transfer"/>
</dbReference>
<dbReference type="InterPro" id="IPR000361">
    <property type="entry name" value="FeS_biogenesis"/>
</dbReference>
<dbReference type="InterPro" id="IPR016092">
    <property type="entry name" value="FeS_cluster_insertion"/>
</dbReference>
<dbReference type="InterPro" id="IPR017870">
    <property type="entry name" value="FeS_cluster_insertion_CS"/>
</dbReference>
<dbReference type="InterPro" id="IPR035903">
    <property type="entry name" value="HesB-like_dom_sf"/>
</dbReference>
<dbReference type="InterPro" id="IPR011302">
    <property type="entry name" value="IscA_proteobacteria"/>
</dbReference>
<dbReference type="NCBIfam" id="TIGR00049">
    <property type="entry name" value="iron-sulfur cluster assembly accessory protein"/>
    <property type="match status" value="1"/>
</dbReference>
<dbReference type="NCBIfam" id="TIGR02011">
    <property type="entry name" value="IscA"/>
    <property type="match status" value="1"/>
</dbReference>
<dbReference type="NCBIfam" id="NF007049">
    <property type="entry name" value="PRK09502.1"/>
    <property type="match status" value="1"/>
</dbReference>
<dbReference type="PANTHER" id="PTHR10072:SF41">
    <property type="entry name" value="IRON-SULFUR CLUSTER ASSEMBLY 1 HOMOLOG, MITOCHONDRIAL"/>
    <property type="match status" value="1"/>
</dbReference>
<dbReference type="PANTHER" id="PTHR10072">
    <property type="entry name" value="IRON-SULFUR CLUSTER ASSEMBLY PROTEIN"/>
    <property type="match status" value="1"/>
</dbReference>
<dbReference type="Pfam" id="PF01521">
    <property type="entry name" value="Fe-S_biosyn"/>
    <property type="match status" value="1"/>
</dbReference>
<dbReference type="SUPFAM" id="SSF89360">
    <property type="entry name" value="HesB-like domain"/>
    <property type="match status" value="1"/>
</dbReference>
<dbReference type="PROSITE" id="PS01152">
    <property type="entry name" value="HESB"/>
    <property type="match status" value="1"/>
</dbReference>
<comment type="function">
    <text evidence="1">Is able to transfer iron-sulfur clusters to apo-ferredoxin. Multiple cycles of [2Fe2S] cluster formation and transfer are observed, suggesting that IscA acts catalytically. Recruits intracellular free iron so as to provide iron for the assembly of transient iron-sulfur cluster in IscU in the presence of IscS, L-cysteine and the thioredoxin reductase system TrxA/TrxB.</text>
</comment>
<comment type="cofactor">
    <cofactor evidence="1">
        <name>Fe cation</name>
        <dbReference type="ChEBI" id="CHEBI:24875"/>
    </cofactor>
    <text evidence="1">Binds 2 iron ions per dimer. The dimer may bind additional iron ions.</text>
</comment>
<comment type="subunit">
    <text evidence="1">Homodimer; may form tetramers and higher multimers.</text>
</comment>
<comment type="similarity">
    <text evidence="1">Belongs to the HesB/IscA family.</text>
</comment>
<protein>
    <recommendedName>
        <fullName evidence="1">Iron-binding protein IscA</fullName>
    </recommendedName>
    <alternativeName>
        <fullName evidence="1">Iron-sulfur cluster assembly protein</fullName>
    </alternativeName>
</protein>
<feature type="chain" id="PRO_1000145757" description="Iron-binding protein IscA">
    <location>
        <begin position="1"/>
        <end position="107"/>
    </location>
</feature>
<feature type="binding site" evidence="1">
    <location>
        <position position="35"/>
    </location>
    <ligand>
        <name>Fe cation</name>
        <dbReference type="ChEBI" id="CHEBI:24875"/>
    </ligand>
</feature>
<feature type="binding site" evidence="1">
    <location>
        <position position="99"/>
    </location>
    <ligand>
        <name>Fe cation</name>
        <dbReference type="ChEBI" id="CHEBI:24875"/>
    </ligand>
</feature>
<feature type="binding site" evidence="1">
    <location>
        <position position="101"/>
    </location>
    <ligand>
        <name>Fe cation</name>
        <dbReference type="ChEBI" id="CHEBI:24875"/>
    </ligand>
</feature>
<reference key="1">
    <citation type="journal article" date="2008" name="PLoS Genet.">
        <title>Complete genome sequence of the N2-fixing broad host range endophyte Klebsiella pneumoniae 342 and virulence predictions verified in mice.</title>
        <authorList>
            <person name="Fouts D.E."/>
            <person name="Tyler H.L."/>
            <person name="DeBoy R.T."/>
            <person name="Daugherty S."/>
            <person name="Ren Q."/>
            <person name="Badger J.H."/>
            <person name="Durkin A.S."/>
            <person name="Huot H."/>
            <person name="Shrivastava S."/>
            <person name="Kothari S."/>
            <person name="Dodson R.J."/>
            <person name="Mohamoud Y."/>
            <person name="Khouri H."/>
            <person name="Roesch L.F.W."/>
            <person name="Krogfelt K.A."/>
            <person name="Struve C."/>
            <person name="Triplett E.W."/>
            <person name="Methe B.A."/>
        </authorList>
    </citation>
    <scope>NUCLEOTIDE SEQUENCE [LARGE SCALE GENOMIC DNA]</scope>
    <source>
        <strain>342</strain>
    </source>
</reference>
<evidence type="ECO:0000255" key="1">
    <source>
        <dbReference type="HAMAP-Rule" id="MF_01429"/>
    </source>
</evidence>
<name>ISCA_KLEP3</name>
<accession>B5XNJ9</accession>
<sequence length="107" mass="11465">MSITLSDSAAARVNSFLANRGKGFGLRLGVRTSGCSGMAYVLEFVDEPAAEDTVFEDKGVKVVIDGKSLQFLDGTQLDFVKEGLNEGFKFTNPNVKDECGCGESFNV</sequence>
<organism>
    <name type="scientific">Klebsiella pneumoniae (strain 342)</name>
    <dbReference type="NCBI Taxonomy" id="507522"/>
    <lineage>
        <taxon>Bacteria</taxon>
        <taxon>Pseudomonadati</taxon>
        <taxon>Pseudomonadota</taxon>
        <taxon>Gammaproteobacteria</taxon>
        <taxon>Enterobacterales</taxon>
        <taxon>Enterobacteriaceae</taxon>
        <taxon>Klebsiella/Raoultella group</taxon>
        <taxon>Klebsiella</taxon>
        <taxon>Klebsiella pneumoniae complex</taxon>
    </lineage>
</organism>
<keyword id="KW-0408">Iron</keyword>
<keyword id="KW-0479">Metal-binding</keyword>
<proteinExistence type="inferred from homology"/>